<evidence type="ECO:0000250" key="1">
    <source>
        <dbReference type="UniProtKB" id="O43464"/>
    </source>
</evidence>
<evidence type="ECO:0000250" key="2">
    <source>
        <dbReference type="UniProtKB" id="Q9VFJ3"/>
    </source>
</evidence>
<evidence type="ECO:0000255" key="3"/>
<evidence type="ECO:0000255" key="4">
    <source>
        <dbReference type="PROSITE-ProRule" id="PRU00143"/>
    </source>
</evidence>
<evidence type="ECO:0000256" key="5">
    <source>
        <dbReference type="SAM" id="MobiDB-lite"/>
    </source>
</evidence>
<evidence type="ECO:0000312" key="6">
    <source>
        <dbReference type="EMBL" id="EDW81584.1"/>
    </source>
</evidence>
<protein>
    <recommendedName>
        <fullName evidence="2">Serine protease HTRA2, mitochondrial</fullName>
        <ecNumber>3.4.21.108</ecNumber>
    </recommendedName>
    <alternativeName>
        <fullName evidence="2">High temperature requirement protein A2</fullName>
    </alternativeName>
</protein>
<keyword id="KW-0053">Apoptosis</keyword>
<keyword id="KW-0378">Hydrolase</keyword>
<keyword id="KW-0472">Membrane</keyword>
<keyword id="KW-0496">Mitochondrion</keyword>
<keyword id="KW-0645">Protease</keyword>
<keyword id="KW-1185">Reference proteome</keyword>
<keyword id="KW-0720">Serine protease</keyword>
<keyword id="KW-0809">Transit peptide</keyword>
<keyword id="KW-0812">Transmembrane</keyword>
<keyword id="KW-1133">Transmembrane helix</keyword>
<keyword id="KW-0865">Zymogen</keyword>
<comment type="function">
    <text evidence="2">Serine protease that shows proteolytic activity against a non-specific substrate beta-casein. Promotes or induces cell death either by direct binding to and inhibition of BIRC proteins (also called inhibitor of apoptosis proteins, IAPs), leading to an increase in caspase activity, or by a BIRC inhibition-independent, caspase-independent and serine protease activity-dependent mechanism. Can antagonize antiapoptotic activity of th/Diap1 by directly inducing the degradation of th/Diap1 (By similarity).</text>
</comment>
<comment type="catalytic activity">
    <reaction>
        <text>Cleavage of non-polar aliphatic amino-acids at the P1 position, with a preference for Val, Ile and Met. At the P2 and P3 positions, Arg is selected most strongly with a secondary preference for other hydrophilic residues.</text>
        <dbReference type="EC" id="3.4.21.108"/>
    </reaction>
</comment>
<comment type="subunit">
    <text evidence="2">Interacts with th/DIAP1 (via BIR 2 domain).</text>
</comment>
<comment type="subcellular location">
    <subcellularLocation>
        <location evidence="2">Mitochondrion intermembrane space</location>
        <topology evidence="3">Single-pass membrane protein</topology>
    </subcellularLocation>
    <subcellularLocation>
        <location evidence="2">Mitochondrion membrane</location>
        <topology evidence="3">Single-pass membrane protein</topology>
    </subcellularLocation>
    <text evidence="2">Predominantly present in the intermembrane space. Released into the cytosol following apoptotic stimuli, such as UV treatment. The extramitochondrial protein does not diffuse throughout the cytosol but stays near the mitochondria.</text>
</comment>
<comment type="similarity">
    <text evidence="3">Belongs to the peptidase S1C family.</text>
</comment>
<dbReference type="EC" id="3.4.21.108"/>
<dbReference type="EMBL" id="CH964232">
    <property type="protein sequence ID" value="EDW81584.1"/>
    <property type="molecule type" value="Genomic_DNA"/>
</dbReference>
<dbReference type="RefSeq" id="XP_002070598.2">
    <property type="nucleotide sequence ID" value="XM_002070562.2"/>
</dbReference>
<dbReference type="SMR" id="B4N937"/>
<dbReference type="STRING" id="7260.B4N937"/>
<dbReference type="EnsemblMetazoa" id="XM_023178820.2">
    <property type="protein sequence ID" value="XP_023034588.1"/>
    <property type="gene ID" value="LOC6647029"/>
</dbReference>
<dbReference type="eggNOG" id="KOG1320">
    <property type="taxonomic scope" value="Eukaryota"/>
</dbReference>
<dbReference type="HOGENOM" id="CLU_020120_6_0_1"/>
<dbReference type="OMA" id="IMSPEGY"/>
<dbReference type="OrthoDB" id="4217619at2759"/>
<dbReference type="PhylomeDB" id="B4N937"/>
<dbReference type="Proteomes" id="UP000007798">
    <property type="component" value="Unassembled WGS sequence"/>
</dbReference>
<dbReference type="GO" id="GO:0005829">
    <property type="term" value="C:cytosol"/>
    <property type="evidence" value="ECO:0007669"/>
    <property type="project" value="EnsemblMetazoa"/>
</dbReference>
<dbReference type="GO" id="GO:0005758">
    <property type="term" value="C:mitochondrial intermembrane space"/>
    <property type="evidence" value="ECO:0007669"/>
    <property type="project" value="UniProtKB-SubCell"/>
</dbReference>
<dbReference type="GO" id="GO:0031966">
    <property type="term" value="C:mitochondrial membrane"/>
    <property type="evidence" value="ECO:0007669"/>
    <property type="project" value="UniProtKB-SubCell"/>
</dbReference>
<dbReference type="GO" id="GO:0016006">
    <property type="term" value="C:Nebenkern"/>
    <property type="evidence" value="ECO:0007669"/>
    <property type="project" value="EnsemblMetazoa"/>
</dbReference>
<dbReference type="GO" id="GO:0004252">
    <property type="term" value="F:serine-type endopeptidase activity"/>
    <property type="evidence" value="ECO:0007669"/>
    <property type="project" value="EnsemblMetazoa"/>
</dbReference>
<dbReference type="GO" id="GO:0006915">
    <property type="term" value="P:apoptotic process"/>
    <property type="evidence" value="ECO:0007669"/>
    <property type="project" value="UniProtKB-KW"/>
</dbReference>
<dbReference type="GO" id="GO:0035234">
    <property type="term" value="P:ectopic germ cell programmed cell death"/>
    <property type="evidence" value="ECO:0007669"/>
    <property type="project" value="EnsemblMetazoa"/>
</dbReference>
<dbReference type="GO" id="GO:0007005">
    <property type="term" value="P:mitochondrion organization"/>
    <property type="evidence" value="ECO:0007669"/>
    <property type="project" value="EnsemblMetazoa"/>
</dbReference>
<dbReference type="GO" id="GO:0043065">
    <property type="term" value="P:positive regulation of apoptotic process"/>
    <property type="evidence" value="ECO:0007669"/>
    <property type="project" value="EnsemblMetazoa"/>
</dbReference>
<dbReference type="GO" id="GO:0006508">
    <property type="term" value="P:proteolysis"/>
    <property type="evidence" value="ECO:0007669"/>
    <property type="project" value="UniProtKB-KW"/>
</dbReference>
<dbReference type="GO" id="GO:0007283">
    <property type="term" value="P:spermatogenesis"/>
    <property type="evidence" value="ECO:0007669"/>
    <property type="project" value="EnsemblMetazoa"/>
</dbReference>
<dbReference type="CDD" id="cd06785">
    <property type="entry name" value="cpPDZ_HtrA-like"/>
    <property type="match status" value="1"/>
</dbReference>
<dbReference type="FunFam" id="2.40.10.120:FF:000004">
    <property type="entry name" value="Serine protease HTRA2, mitochondrial"/>
    <property type="match status" value="1"/>
</dbReference>
<dbReference type="Gene3D" id="2.30.42.10">
    <property type="match status" value="1"/>
</dbReference>
<dbReference type="Gene3D" id="2.40.10.120">
    <property type="match status" value="1"/>
</dbReference>
<dbReference type="InterPro" id="IPR001478">
    <property type="entry name" value="PDZ"/>
</dbReference>
<dbReference type="InterPro" id="IPR041489">
    <property type="entry name" value="PDZ_6"/>
</dbReference>
<dbReference type="InterPro" id="IPR036034">
    <property type="entry name" value="PDZ_sf"/>
</dbReference>
<dbReference type="InterPro" id="IPR009003">
    <property type="entry name" value="Peptidase_S1_PA"/>
</dbReference>
<dbReference type="InterPro" id="IPR001940">
    <property type="entry name" value="Peptidase_S1C"/>
</dbReference>
<dbReference type="PANTHER" id="PTHR22939">
    <property type="entry name" value="SERINE PROTEASE FAMILY S1C HTRA-RELATED"/>
    <property type="match status" value="1"/>
</dbReference>
<dbReference type="PANTHER" id="PTHR22939:SF129">
    <property type="entry name" value="SERINE PROTEASE HTRA2, MITOCHONDRIAL"/>
    <property type="match status" value="1"/>
</dbReference>
<dbReference type="Pfam" id="PF17820">
    <property type="entry name" value="PDZ_6"/>
    <property type="match status" value="1"/>
</dbReference>
<dbReference type="Pfam" id="PF13365">
    <property type="entry name" value="Trypsin_2"/>
    <property type="match status" value="1"/>
</dbReference>
<dbReference type="PRINTS" id="PR00834">
    <property type="entry name" value="PROTEASES2C"/>
</dbReference>
<dbReference type="SMART" id="SM00228">
    <property type="entry name" value="PDZ"/>
    <property type="match status" value="1"/>
</dbReference>
<dbReference type="SUPFAM" id="SSF50156">
    <property type="entry name" value="PDZ domain-like"/>
    <property type="match status" value="1"/>
</dbReference>
<dbReference type="SUPFAM" id="SSF50494">
    <property type="entry name" value="Trypsin-like serine proteases"/>
    <property type="match status" value="1"/>
</dbReference>
<dbReference type="PROSITE" id="PS50106">
    <property type="entry name" value="PDZ"/>
    <property type="match status" value="1"/>
</dbReference>
<name>HTRA2_DROWI</name>
<feature type="transit peptide" description="Mitochondrion" evidence="3">
    <location>
        <begin position="1"/>
        <end status="unknown"/>
    </location>
</feature>
<feature type="propeptide" id="PRO_0000382199" evidence="3">
    <location>
        <begin status="unknown"/>
        <end position="84"/>
    </location>
</feature>
<feature type="chain" id="PRO_0000382200" description="Serine protease HTRA2, mitochondrial" evidence="2">
    <location>
        <begin position="85"/>
        <end position="434"/>
    </location>
</feature>
<feature type="transmembrane region" description="Helical" evidence="3">
    <location>
        <begin position="74"/>
        <end position="92"/>
    </location>
</feature>
<feature type="domain" description="PDZ" evidence="4">
    <location>
        <begin position="337"/>
        <end position="424"/>
    </location>
</feature>
<feature type="region of interest" description="Disordered" evidence="5">
    <location>
        <begin position="34"/>
        <end position="65"/>
    </location>
</feature>
<feature type="region of interest" description="Serine protease" evidence="3">
    <location>
        <begin position="151"/>
        <end position="314"/>
    </location>
</feature>
<feature type="short sequence motif" description="IAP-binding" evidence="3">
    <location>
        <begin position="85"/>
        <end position="88"/>
    </location>
</feature>
<feature type="compositionally biased region" description="Low complexity" evidence="5">
    <location>
        <begin position="35"/>
        <end position="60"/>
    </location>
</feature>
<feature type="active site" description="Charge relay system" evidence="1">
    <location>
        <position position="169"/>
    </location>
</feature>
<feature type="active site" description="Charge relay system" evidence="1">
    <location>
        <position position="201"/>
    </location>
</feature>
<feature type="active site" description="Charge relay system" evidence="2">
    <location>
        <position position="278"/>
    </location>
</feature>
<accession>B4N937</accession>
<sequence>MAFRRINNLELFIKRCSAPTLYYSSIRTATGNNYSNNTANITTDSSSSSNNNSNRNNKNDNNNEDNNKFNWRSLVRFFVPFSLGAVASSLVMKRDDLELTPTISAARPSGRRREFNFIADVVGGCADSVVYIEIKDTRHFDYFSGQPITASNGSGFVIEQNGLILTNAHVVINKPHTMVQVRLSDGRTFPATIEDVDQTSDLATLRIQVNNLPVMRLGKSSTLRSGEWVVALGSPLALSNTVTAGVISSTQRASQELGLRNRDINYLQTDAAITFGNSGGPLVNLDGEAIGVNSMKVTAGISFAIPIDYVKVFLERAAERRKKGSAYKTGYPVKRYMGITMLTLTPDILFELKSRSQNMPSNLMHGVLVWKVIVGSPAHSGGLQPGDIVTHINKKEIKNSSDVYDALGCGDKELNMIIMRGVKQMHVTITPEDP</sequence>
<gene>
    <name evidence="2" type="primary">HtrA2</name>
    <name type="ORF">GK12147</name>
</gene>
<reference evidence="6" key="1">
    <citation type="journal article" date="2007" name="Nature">
        <title>Evolution of genes and genomes on the Drosophila phylogeny.</title>
        <authorList>
            <consortium name="Drosophila 12 genomes consortium"/>
        </authorList>
    </citation>
    <scope>NUCLEOTIDE SEQUENCE [LARGE SCALE GENOMIC DNA]</scope>
    <source>
        <strain evidence="6">Tucson 14030-0811.24</strain>
    </source>
</reference>
<proteinExistence type="inferred from homology"/>
<organism>
    <name type="scientific">Drosophila willistoni</name>
    <name type="common">Fruit fly</name>
    <dbReference type="NCBI Taxonomy" id="7260"/>
    <lineage>
        <taxon>Eukaryota</taxon>
        <taxon>Metazoa</taxon>
        <taxon>Ecdysozoa</taxon>
        <taxon>Arthropoda</taxon>
        <taxon>Hexapoda</taxon>
        <taxon>Insecta</taxon>
        <taxon>Pterygota</taxon>
        <taxon>Neoptera</taxon>
        <taxon>Endopterygota</taxon>
        <taxon>Diptera</taxon>
        <taxon>Brachycera</taxon>
        <taxon>Muscomorpha</taxon>
        <taxon>Ephydroidea</taxon>
        <taxon>Drosophilidae</taxon>
        <taxon>Drosophila</taxon>
        <taxon>Sophophora</taxon>
    </lineage>
</organism>